<feature type="chain" id="PRO_0000182951" description="Deoxyuridine 5'-triphosphate nucleotidohydrolase">
    <location>
        <begin position="1"/>
        <end position="143"/>
    </location>
</feature>
<gene>
    <name type="primary">DUT</name>
    <name type="ordered locus">17L</name>
</gene>
<dbReference type="EC" id="3.6.1.23"/>
<dbReference type="EMBL" id="AY386371">
    <property type="protein sequence ID" value="AAR07375.1"/>
    <property type="molecule type" value="Genomic_DNA"/>
</dbReference>
<dbReference type="RefSeq" id="NP_938274.1">
    <property type="nucleotide sequence ID" value="NC_005179.1"/>
</dbReference>
<dbReference type="SMR" id="Q6TUZ4"/>
<dbReference type="KEGG" id="vg:2943676"/>
<dbReference type="Proteomes" id="UP000008596">
    <property type="component" value="Segment"/>
</dbReference>
<dbReference type="GO" id="GO:0004170">
    <property type="term" value="F:dUTP diphosphatase activity"/>
    <property type="evidence" value="ECO:0007669"/>
    <property type="project" value="UniProtKB-EC"/>
</dbReference>
<dbReference type="GO" id="GO:0000287">
    <property type="term" value="F:magnesium ion binding"/>
    <property type="evidence" value="ECO:0007669"/>
    <property type="project" value="InterPro"/>
</dbReference>
<dbReference type="GO" id="GO:0006226">
    <property type="term" value="P:dUMP biosynthetic process"/>
    <property type="evidence" value="ECO:0007669"/>
    <property type="project" value="InterPro"/>
</dbReference>
<dbReference type="GO" id="GO:0046081">
    <property type="term" value="P:dUTP catabolic process"/>
    <property type="evidence" value="ECO:0007669"/>
    <property type="project" value="InterPro"/>
</dbReference>
<dbReference type="CDD" id="cd07557">
    <property type="entry name" value="trimeric_dUTPase"/>
    <property type="match status" value="1"/>
</dbReference>
<dbReference type="Gene3D" id="2.70.40.10">
    <property type="match status" value="1"/>
</dbReference>
<dbReference type="InterPro" id="IPR008181">
    <property type="entry name" value="dUTPase"/>
</dbReference>
<dbReference type="InterPro" id="IPR029054">
    <property type="entry name" value="dUTPase-like"/>
</dbReference>
<dbReference type="InterPro" id="IPR036157">
    <property type="entry name" value="dUTPase-like_sf"/>
</dbReference>
<dbReference type="InterPro" id="IPR033704">
    <property type="entry name" value="dUTPase_trimeric"/>
</dbReference>
<dbReference type="NCBIfam" id="TIGR00576">
    <property type="entry name" value="dut"/>
    <property type="match status" value="1"/>
</dbReference>
<dbReference type="NCBIfam" id="NF001862">
    <property type="entry name" value="PRK00601.1"/>
    <property type="match status" value="1"/>
</dbReference>
<dbReference type="PANTHER" id="PTHR11241">
    <property type="entry name" value="DEOXYURIDINE 5'-TRIPHOSPHATE NUCLEOTIDOHYDROLASE"/>
    <property type="match status" value="1"/>
</dbReference>
<dbReference type="PANTHER" id="PTHR11241:SF0">
    <property type="entry name" value="DEOXYURIDINE 5'-TRIPHOSPHATE NUCLEOTIDOHYDROLASE"/>
    <property type="match status" value="1"/>
</dbReference>
<dbReference type="Pfam" id="PF00692">
    <property type="entry name" value="dUTPase"/>
    <property type="match status" value="1"/>
</dbReference>
<dbReference type="SUPFAM" id="SSF51283">
    <property type="entry name" value="dUTPase-like"/>
    <property type="match status" value="1"/>
</dbReference>
<keyword id="KW-0378">Hydrolase</keyword>
<keyword id="KW-0460">Magnesium</keyword>
<keyword id="KW-0479">Metal-binding</keyword>
<keyword id="KW-0546">Nucleotide metabolism</keyword>
<keyword id="KW-1185">Reference proteome</keyword>
<organism>
    <name type="scientific">Yaba monkey tumor virus (strain VR587)</name>
    <name type="common">YMTV</name>
    <dbReference type="NCBI Taxonomy" id="928314"/>
    <lineage>
        <taxon>Viruses</taxon>
        <taxon>Varidnaviria</taxon>
        <taxon>Bamfordvirae</taxon>
        <taxon>Nucleocytoviricota</taxon>
        <taxon>Pokkesviricetes</taxon>
        <taxon>Chitovirales</taxon>
        <taxon>Poxviridae</taxon>
        <taxon>Chordopoxvirinae</taxon>
        <taxon>Yatapoxvirus</taxon>
        <taxon>Yaba monkey tumor virus</taxon>
    </lineage>
</organism>
<sequence length="143" mass="15658">MSKFIVYVKKSSEFATIPTRSSKKSAGYDLYSAYDYLVRPKSRVLVKTDICLSIPDECYGRIASRSGLSLNNSIDIGGGVIDGDYRGVIGVIFINNGNSPHYIKRGDRIAQIVFERLANVEIKEISNLDCTCRGDCGFGSSGI</sequence>
<accession>Q6TUZ4</accession>
<protein>
    <recommendedName>
        <fullName>Deoxyuridine 5'-triphosphate nucleotidohydrolase</fullName>
        <shortName>dUTPase</shortName>
        <ecNumber>3.6.1.23</ecNumber>
    </recommendedName>
    <alternativeName>
        <fullName>dUTP pyrophosphatase</fullName>
    </alternativeName>
</protein>
<reference key="1">
    <citation type="journal article" date="2003" name="J. Virol.">
        <title>Complete genomic sequence and comparative analysis of the tumorigenic poxvirus Yaba monkey tumor virus.</title>
        <authorList>
            <person name="Brunetti C.R."/>
            <person name="Amano H."/>
            <person name="Ueda Y."/>
            <person name="Qin J."/>
            <person name="Miyamura T."/>
            <person name="Suzuki T."/>
            <person name="Li X."/>
            <person name="Barrett J.W."/>
            <person name="McFadden G."/>
        </authorList>
    </citation>
    <scope>NUCLEOTIDE SEQUENCE [LARGE SCALE GENOMIC DNA]</scope>
</reference>
<evidence type="ECO:0000250" key="1"/>
<evidence type="ECO:0000305" key="2"/>
<comment type="function">
    <text>This enzyme is involved in nucleotide metabolism: it produces dUMP, the immediate precursor of thymidine nucleotides and it decreases the intracellular concentration of dUTP so that uracil cannot be incorporated into DNA.</text>
</comment>
<comment type="catalytic activity">
    <reaction>
        <text>dUTP + H2O = dUMP + diphosphate + H(+)</text>
        <dbReference type="Rhea" id="RHEA:10248"/>
        <dbReference type="ChEBI" id="CHEBI:15377"/>
        <dbReference type="ChEBI" id="CHEBI:15378"/>
        <dbReference type="ChEBI" id="CHEBI:33019"/>
        <dbReference type="ChEBI" id="CHEBI:61555"/>
        <dbReference type="ChEBI" id="CHEBI:246422"/>
        <dbReference type="EC" id="3.6.1.23"/>
    </reaction>
</comment>
<comment type="cofactor">
    <cofactor evidence="1">
        <name>Mg(2+)</name>
        <dbReference type="ChEBI" id="CHEBI:18420"/>
    </cofactor>
</comment>
<comment type="similarity">
    <text evidence="2">Belongs to the dUTPase family.</text>
</comment>
<proteinExistence type="inferred from homology"/>
<name>DUT_YMTV5</name>
<organismHost>
    <name type="scientific">Erythrocebus patas</name>
    <name type="common">Red guenon</name>
    <name type="synonym">Cercopithecus patas</name>
    <dbReference type="NCBI Taxonomy" id="9538"/>
</organismHost>
<organismHost>
    <name type="scientific">Homo sapiens</name>
    <name type="common">Human</name>
    <dbReference type="NCBI Taxonomy" id="9606"/>
</organismHost>
<organismHost>
    <name type="scientific">Macaca</name>
    <name type="common">macaques</name>
    <dbReference type="NCBI Taxonomy" id="9539"/>
</organismHost>
<organismHost>
    <name type="scientific">Papio hamadryas</name>
    <name type="common">Hamadryas baboon</name>
    <dbReference type="NCBI Taxonomy" id="9557"/>
</organismHost>